<reference key="1">
    <citation type="journal article" date="2003" name="Appl. Microbiol. Biotechnol.">
        <title>The Corynebacterium glutamicum genome: features and impacts on biotechnological processes.</title>
        <authorList>
            <person name="Ikeda M."/>
            <person name="Nakagawa S."/>
        </authorList>
    </citation>
    <scope>NUCLEOTIDE SEQUENCE [LARGE SCALE GENOMIC DNA]</scope>
    <source>
        <strain>ATCC 13032 / DSM 20300 / JCM 1318 / BCRC 11384 / CCUG 27702 / LMG 3730 / NBRC 12168 / NCIMB 10025 / NRRL B-2784 / 534</strain>
    </source>
</reference>
<reference key="2">
    <citation type="journal article" date="2003" name="J. Biotechnol.">
        <title>The complete Corynebacterium glutamicum ATCC 13032 genome sequence and its impact on the production of L-aspartate-derived amino acids and vitamins.</title>
        <authorList>
            <person name="Kalinowski J."/>
            <person name="Bathe B."/>
            <person name="Bartels D."/>
            <person name="Bischoff N."/>
            <person name="Bott M."/>
            <person name="Burkovski A."/>
            <person name="Dusch N."/>
            <person name="Eggeling L."/>
            <person name="Eikmanns B.J."/>
            <person name="Gaigalat L."/>
            <person name="Goesmann A."/>
            <person name="Hartmann M."/>
            <person name="Huthmacher K."/>
            <person name="Kraemer R."/>
            <person name="Linke B."/>
            <person name="McHardy A.C."/>
            <person name="Meyer F."/>
            <person name="Moeckel B."/>
            <person name="Pfefferle W."/>
            <person name="Puehler A."/>
            <person name="Rey D.A."/>
            <person name="Rueckert C."/>
            <person name="Rupp O."/>
            <person name="Sahm H."/>
            <person name="Wendisch V.F."/>
            <person name="Wiegraebe I."/>
            <person name="Tauch A."/>
        </authorList>
    </citation>
    <scope>NUCLEOTIDE SEQUENCE [LARGE SCALE GENOMIC DNA]</scope>
    <source>
        <strain>ATCC 13032 / DSM 20300 / JCM 1318 / BCRC 11384 / CCUG 27702 / LMG 3730 / NBRC 12168 / NCIMB 10025 / NRRL B-2784 / 534</strain>
    </source>
</reference>
<dbReference type="EMBL" id="BA000036">
    <property type="protein sequence ID" value="BAB97636.1"/>
    <property type="molecule type" value="Genomic_DNA"/>
</dbReference>
<dbReference type="EMBL" id="BX927148">
    <property type="protein sequence ID" value="CAF18814.1"/>
    <property type="molecule type" value="Genomic_DNA"/>
</dbReference>
<dbReference type="RefSeq" id="NP_599496.1">
    <property type="nucleotide sequence ID" value="NC_003450.3"/>
</dbReference>
<dbReference type="RefSeq" id="WP_003855676.1">
    <property type="nucleotide sequence ID" value="NC_006958.1"/>
</dbReference>
<dbReference type="SMR" id="Q8NTQ9"/>
<dbReference type="STRING" id="196627.cg0297"/>
<dbReference type="KEGG" id="cgb:cg0297"/>
<dbReference type="KEGG" id="cgl:Cgl0243"/>
<dbReference type="PATRIC" id="fig|196627.13.peg.248"/>
<dbReference type="eggNOG" id="COG0718">
    <property type="taxonomic scope" value="Bacteria"/>
</dbReference>
<dbReference type="HOGENOM" id="CLU_140930_4_0_11"/>
<dbReference type="OrthoDB" id="9809370at2"/>
<dbReference type="BioCyc" id="CORYNE:G18NG-9798-MONOMER"/>
<dbReference type="Proteomes" id="UP000000582">
    <property type="component" value="Chromosome"/>
</dbReference>
<dbReference type="Proteomes" id="UP000001009">
    <property type="component" value="Chromosome"/>
</dbReference>
<dbReference type="GO" id="GO:0043590">
    <property type="term" value="C:bacterial nucleoid"/>
    <property type="evidence" value="ECO:0007669"/>
    <property type="project" value="UniProtKB-UniRule"/>
</dbReference>
<dbReference type="GO" id="GO:0005829">
    <property type="term" value="C:cytosol"/>
    <property type="evidence" value="ECO:0007669"/>
    <property type="project" value="TreeGrafter"/>
</dbReference>
<dbReference type="GO" id="GO:0003677">
    <property type="term" value="F:DNA binding"/>
    <property type="evidence" value="ECO:0007669"/>
    <property type="project" value="UniProtKB-UniRule"/>
</dbReference>
<dbReference type="Gene3D" id="3.30.1310.10">
    <property type="entry name" value="Nucleoid-associated protein YbaB-like domain"/>
    <property type="match status" value="1"/>
</dbReference>
<dbReference type="HAMAP" id="MF_00274">
    <property type="entry name" value="DNA_YbaB_EbfC"/>
    <property type="match status" value="1"/>
</dbReference>
<dbReference type="InterPro" id="IPR036894">
    <property type="entry name" value="YbaB-like_sf"/>
</dbReference>
<dbReference type="InterPro" id="IPR004401">
    <property type="entry name" value="YbaB/EbfC"/>
</dbReference>
<dbReference type="NCBIfam" id="TIGR00103">
    <property type="entry name" value="DNA_YbaB_EbfC"/>
    <property type="match status" value="1"/>
</dbReference>
<dbReference type="PANTHER" id="PTHR33449">
    <property type="entry name" value="NUCLEOID-ASSOCIATED PROTEIN YBAB"/>
    <property type="match status" value="1"/>
</dbReference>
<dbReference type="PANTHER" id="PTHR33449:SF1">
    <property type="entry name" value="NUCLEOID-ASSOCIATED PROTEIN YBAB"/>
    <property type="match status" value="1"/>
</dbReference>
<dbReference type="Pfam" id="PF02575">
    <property type="entry name" value="YbaB_DNA_bd"/>
    <property type="match status" value="1"/>
</dbReference>
<dbReference type="PIRSF" id="PIRSF004555">
    <property type="entry name" value="UCP004555"/>
    <property type="match status" value="1"/>
</dbReference>
<dbReference type="SUPFAM" id="SSF82607">
    <property type="entry name" value="YbaB-like"/>
    <property type="match status" value="1"/>
</dbReference>
<organism>
    <name type="scientific">Corynebacterium glutamicum (strain ATCC 13032 / DSM 20300 / JCM 1318 / BCRC 11384 / CCUG 27702 / LMG 3730 / NBRC 12168 / NCIMB 10025 / NRRL B-2784 / 534)</name>
    <dbReference type="NCBI Taxonomy" id="196627"/>
    <lineage>
        <taxon>Bacteria</taxon>
        <taxon>Bacillati</taxon>
        <taxon>Actinomycetota</taxon>
        <taxon>Actinomycetes</taxon>
        <taxon>Mycobacteriales</taxon>
        <taxon>Corynebacteriaceae</taxon>
        <taxon>Corynebacterium</taxon>
    </lineage>
</organism>
<sequence length="103" mass="10722">MTQPDMSQILAQAQQMQAQLQAAQQEILATTVVGNAGNGLVTVTMAGNGEVSAVTVDPKVVDPEDVETLQDLLLGAFKDAHNKVANVAEEKMGPLSQGMGGLF</sequence>
<gene>
    <name type="ordered locus">Cgl0243</name>
    <name type="ordered locus">cg0297</name>
</gene>
<name>Y243_CORGL</name>
<comment type="function">
    <text evidence="1">Binds to DNA and alters its conformation. May be involved in regulation of gene expression, nucleoid organization and DNA protection.</text>
</comment>
<comment type="subunit">
    <text evidence="1">Homodimer.</text>
</comment>
<comment type="subcellular location">
    <subcellularLocation>
        <location evidence="1">Cytoplasm</location>
        <location evidence="1">Nucleoid</location>
    </subcellularLocation>
</comment>
<comment type="similarity">
    <text evidence="1">Belongs to the YbaB/EbfC family.</text>
</comment>
<evidence type="ECO:0000255" key="1">
    <source>
        <dbReference type="HAMAP-Rule" id="MF_00274"/>
    </source>
</evidence>
<proteinExistence type="inferred from homology"/>
<feature type="chain" id="PRO_0000170388" description="Nucleoid-associated protein Cgl0243/cg0297">
    <location>
        <begin position="1"/>
        <end position="103"/>
    </location>
</feature>
<accession>Q8NTQ9</accession>
<protein>
    <recommendedName>
        <fullName evidence="1">Nucleoid-associated protein Cgl0243/cg0297</fullName>
    </recommendedName>
</protein>
<keyword id="KW-0963">Cytoplasm</keyword>
<keyword id="KW-0238">DNA-binding</keyword>
<keyword id="KW-1185">Reference proteome</keyword>